<proteinExistence type="inferred from homology"/>
<evidence type="ECO:0000255" key="1">
    <source>
        <dbReference type="HAMAP-Rule" id="MF_00503"/>
    </source>
</evidence>
<evidence type="ECO:0000305" key="2"/>
<gene>
    <name evidence="1" type="primary">rplI</name>
    <name type="ordered locus">Spea_3583</name>
</gene>
<name>RL9_SHEPA</name>
<protein>
    <recommendedName>
        <fullName evidence="1">Large ribosomal subunit protein bL9</fullName>
    </recommendedName>
    <alternativeName>
        <fullName evidence="2">50S ribosomal protein L9</fullName>
    </alternativeName>
</protein>
<accession>A8H8K9</accession>
<organism>
    <name type="scientific">Shewanella pealeana (strain ATCC 700345 / ANG-SQ1)</name>
    <dbReference type="NCBI Taxonomy" id="398579"/>
    <lineage>
        <taxon>Bacteria</taxon>
        <taxon>Pseudomonadati</taxon>
        <taxon>Pseudomonadota</taxon>
        <taxon>Gammaproteobacteria</taxon>
        <taxon>Alteromonadales</taxon>
        <taxon>Shewanellaceae</taxon>
        <taxon>Shewanella</taxon>
    </lineage>
</organism>
<dbReference type="EMBL" id="CP000851">
    <property type="protein sequence ID" value="ABV88896.1"/>
    <property type="molecule type" value="Genomic_DNA"/>
</dbReference>
<dbReference type="RefSeq" id="WP_012156781.1">
    <property type="nucleotide sequence ID" value="NC_009901.1"/>
</dbReference>
<dbReference type="SMR" id="A8H8K9"/>
<dbReference type="STRING" id="398579.Spea_3583"/>
<dbReference type="KEGG" id="spl:Spea_3583"/>
<dbReference type="eggNOG" id="COG0359">
    <property type="taxonomic scope" value="Bacteria"/>
</dbReference>
<dbReference type="HOGENOM" id="CLU_078938_4_1_6"/>
<dbReference type="OrthoDB" id="9788336at2"/>
<dbReference type="Proteomes" id="UP000002608">
    <property type="component" value="Chromosome"/>
</dbReference>
<dbReference type="GO" id="GO:1990904">
    <property type="term" value="C:ribonucleoprotein complex"/>
    <property type="evidence" value="ECO:0007669"/>
    <property type="project" value="UniProtKB-KW"/>
</dbReference>
<dbReference type="GO" id="GO:0005840">
    <property type="term" value="C:ribosome"/>
    <property type="evidence" value="ECO:0007669"/>
    <property type="project" value="UniProtKB-KW"/>
</dbReference>
<dbReference type="GO" id="GO:0019843">
    <property type="term" value="F:rRNA binding"/>
    <property type="evidence" value="ECO:0007669"/>
    <property type="project" value="UniProtKB-UniRule"/>
</dbReference>
<dbReference type="GO" id="GO:0003735">
    <property type="term" value="F:structural constituent of ribosome"/>
    <property type="evidence" value="ECO:0007669"/>
    <property type="project" value="InterPro"/>
</dbReference>
<dbReference type="GO" id="GO:0006412">
    <property type="term" value="P:translation"/>
    <property type="evidence" value="ECO:0007669"/>
    <property type="project" value="UniProtKB-UniRule"/>
</dbReference>
<dbReference type="FunFam" id="3.10.430.100:FF:000001">
    <property type="entry name" value="50S ribosomal protein L9"/>
    <property type="match status" value="1"/>
</dbReference>
<dbReference type="FunFam" id="3.40.5.10:FF:000001">
    <property type="entry name" value="50S ribosomal protein L9"/>
    <property type="match status" value="1"/>
</dbReference>
<dbReference type="Gene3D" id="3.10.430.100">
    <property type="entry name" value="Ribosomal protein L9, C-terminal domain"/>
    <property type="match status" value="1"/>
</dbReference>
<dbReference type="Gene3D" id="3.40.5.10">
    <property type="entry name" value="Ribosomal protein L9, N-terminal domain"/>
    <property type="match status" value="1"/>
</dbReference>
<dbReference type="HAMAP" id="MF_00503">
    <property type="entry name" value="Ribosomal_bL9"/>
    <property type="match status" value="1"/>
</dbReference>
<dbReference type="InterPro" id="IPR000244">
    <property type="entry name" value="Ribosomal_bL9"/>
</dbReference>
<dbReference type="InterPro" id="IPR009027">
    <property type="entry name" value="Ribosomal_bL9/RNase_H1_N"/>
</dbReference>
<dbReference type="InterPro" id="IPR020594">
    <property type="entry name" value="Ribosomal_bL9_bac/chp"/>
</dbReference>
<dbReference type="InterPro" id="IPR020069">
    <property type="entry name" value="Ribosomal_bL9_C"/>
</dbReference>
<dbReference type="InterPro" id="IPR036791">
    <property type="entry name" value="Ribosomal_bL9_C_sf"/>
</dbReference>
<dbReference type="InterPro" id="IPR020070">
    <property type="entry name" value="Ribosomal_bL9_N"/>
</dbReference>
<dbReference type="InterPro" id="IPR036935">
    <property type="entry name" value="Ribosomal_bL9_N_sf"/>
</dbReference>
<dbReference type="NCBIfam" id="TIGR00158">
    <property type="entry name" value="L9"/>
    <property type="match status" value="1"/>
</dbReference>
<dbReference type="PANTHER" id="PTHR21368">
    <property type="entry name" value="50S RIBOSOMAL PROTEIN L9"/>
    <property type="match status" value="1"/>
</dbReference>
<dbReference type="Pfam" id="PF03948">
    <property type="entry name" value="Ribosomal_L9_C"/>
    <property type="match status" value="1"/>
</dbReference>
<dbReference type="Pfam" id="PF01281">
    <property type="entry name" value="Ribosomal_L9_N"/>
    <property type="match status" value="1"/>
</dbReference>
<dbReference type="SUPFAM" id="SSF55658">
    <property type="entry name" value="L9 N-domain-like"/>
    <property type="match status" value="1"/>
</dbReference>
<dbReference type="SUPFAM" id="SSF55653">
    <property type="entry name" value="Ribosomal protein L9 C-domain"/>
    <property type="match status" value="1"/>
</dbReference>
<dbReference type="PROSITE" id="PS00651">
    <property type="entry name" value="RIBOSOMAL_L9"/>
    <property type="match status" value="1"/>
</dbReference>
<comment type="function">
    <text evidence="1">Binds to the 23S rRNA.</text>
</comment>
<comment type="similarity">
    <text evidence="1">Belongs to the bacterial ribosomal protein bL9 family.</text>
</comment>
<keyword id="KW-1185">Reference proteome</keyword>
<keyword id="KW-0687">Ribonucleoprotein</keyword>
<keyword id="KW-0689">Ribosomal protein</keyword>
<keyword id="KW-0694">RNA-binding</keyword>
<keyword id="KW-0699">rRNA-binding</keyword>
<reference key="1">
    <citation type="submission" date="2007-10" db="EMBL/GenBank/DDBJ databases">
        <title>Complete sequence of Shewanella pealeana ATCC 700345.</title>
        <authorList>
            <consortium name="US DOE Joint Genome Institute"/>
            <person name="Copeland A."/>
            <person name="Lucas S."/>
            <person name="Lapidus A."/>
            <person name="Barry K."/>
            <person name="Glavina del Rio T."/>
            <person name="Dalin E."/>
            <person name="Tice H."/>
            <person name="Pitluck S."/>
            <person name="Chertkov O."/>
            <person name="Brettin T."/>
            <person name="Bruce D."/>
            <person name="Detter J.C."/>
            <person name="Han C."/>
            <person name="Schmutz J."/>
            <person name="Larimer F."/>
            <person name="Land M."/>
            <person name="Hauser L."/>
            <person name="Kyrpides N."/>
            <person name="Kim E."/>
            <person name="Zhao J.-S.Z."/>
            <person name="Manno D."/>
            <person name="Hawari J."/>
            <person name="Richardson P."/>
        </authorList>
    </citation>
    <scope>NUCLEOTIDE SEQUENCE [LARGE SCALE GENOMIC DNA]</scope>
    <source>
        <strain>ATCC 700345 / ANG-SQ1</strain>
    </source>
</reference>
<sequence>MNVILLDKIANLGNLGDQVSVKAGYARNFLLPQGKAVVANTANTEVFEARRADLEAKLAADLAAATQRAEKISALESVVIASKAGDEGKLFGSIGNRDIADAVTAAGVELAKSEVRLPLGAIRTTGEFEVEVQVHTEVKAIVKLSVVAEA</sequence>
<feature type="chain" id="PRO_1000081502" description="Large ribosomal subunit protein bL9">
    <location>
        <begin position="1"/>
        <end position="150"/>
    </location>
</feature>